<proteinExistence type="inferred from homology"/>
<feature type="chain" id="PRO_1000014577" description="Small ribosomal subunit protein bS20">
    <location>
        <begin position="1"/>
        <end position="87"/>
    </location>
</feature>
<feature type="region of interest" description="Disordered" evidence="2">
    <location>
        <begin position="1"/>
        <end position="22"/>
    </location>
</feature>
<evidence type="ECO:0000255" key="1">
    <source>
        <dbReference type="HAMAP-Rule" id="MF_00500"/>
    </source>
</evidence>
<evidence type="ECO:0000256" key="2">
    <source>
        <dbReference type="SAM" id="MobiDB-lite"/>
    </source>
</evidence>
<evidence type="ECO:0000305" key="3"/>
<sequence>MANHKSALKRHKQSLKRAARNRAVRTRIKNVIKDVRIALQQQDKEQAATALVQASAVLDKAASKGVVHWKTAARKISRLTKAVNQVA</sequence>
<dbReference type="EMBL" id="CP000527">
    <property type="protein sequence ID" value="ABM28286.1"/>
    <property type="molecule type" value="Genomic_DNA"/>
</dbReference>
<dbReference type="RefSeq" id="WP_010939182.1">
    <property type="nucleotide sequence ID" value="NC_008751.1"/>
</dbReference>
<dbReference type="SMR" id="A1VCX0"/>
<dbReference type="KEGG" id="dvl:Dvul_1267"/>
<dbReference type="HOGENOM" id="CLU_160655_3_1_7"/>
<dbReference type="Proteomes" id="UP000009173">
    <property type="component" value="Chromosome"/>
</dbReference>
<dbReference type="GO" id="GO:0005829">
    <property type="term" value="C:cytosol"/>
    <property type="evidence" value="ECO:0007669"/>
    <property type="project" value="TreeGrafter"/>
</dbReference>
<dbReference type="GO" id="GO:0015935">
    <property type="term" value="C:small ribosomal subunit"/>
    <property type="evidence" value="ECO:0007669"/>
    <property type="project" value="TreeGrafter"/>
</dbReference>
<dbReference type="GO" id="GO:0070181">
    <property type="term" value="F:small ribosomal subunit rRNA binding"/>
    <property type="evidence" value="ECO:0007669"/>
    <property type="project" value="TreeGrafter"/>
</dbReference>
<dbReference type="GO" id="GO:0003735">
    <property type="term" value="F:structural constituent of ribosome"/>
    <property type="evidence" value="ECO:0007669"/>
    <property type="project" value="InterPro"/>
</dbReference>
<dbReference type="GO" id="GO:0006412">
    <property type="term" value="P:translation"/>
    <property type="evidence" value="ECO:0007669"/>
    <property type="project" value="UniProtKB-UniRule"/>
</dbReference>
<dbReference type="FunFam" id="1.20.58.110:FF:000001">
    <property type="entry name" value="30S ribosomal protein S20"/>
    <property type="match status" value="1"/>
</dbReference>
<dbReference type="Gene3D" id="1.20.58.110">
    <property type="entry name" value="Ribosomal protein S20"/>
    <property type="match status" value="1"/>
</dbReference>
<dbReference type="HAMAP" id="MF_00500">
    <property type="entry name" value="Ribosomal_bS20"/>
    <property type="match status" value="1"/>
</dbReference>
<dbReference type="InterPro" id="IPR002583">
    <property type="entry name" value="Ribosomal_bS20"/>
</dbReference>
<dbReference type="InterPro" id="IPR036510">
    <property type="entry name" value="Ribosomal_bS20_sf"/>
</dbReference>
<dbReference type="NCBIfam" id="TIGR00029">
    <property type="entry name" value="S20"/>
    <property type="match status" value="1"/>
</dbReference>
<dbReference type="PANTHER" id="PTHR33398">
    <property type="entry name" value="30S RIBOSOMAL PROTEIN S20"/>
    <property type="match status" value="1"/>
</dbReference>
<dbReference type="PANTHER" id="PTHR33398:SF1">
    <property type="entry name" value="SMALL RIBOSOMAL SUBUNIT PROTEIN BS20C"/>
    <property type="match status" value="1"/>
</dbReference>
<dbReference type="Pfam" id="PF01649">
    <property type="entry name" value="Ribosomal_S20p"/>
    <property type="match status" value="1"/>
</dbReference>
<dbReference type="SUPFAM" id="SSF46992">
    <property type="entry name" value="Ribosomal protein S20"/>
    <property type="match status" value="1"/>
</dbReference>
<comment type="function">
    <text evidence="1">Binds directly to 16S ribosomal RNA.</text>
</comment>
<comment type="similarity">
    <text evidence="1">Belongs to the bacterial ribosomal protein bS20 family.</text>
</comment>
<organism>
    <name type="scientific">Nitratidesulfovibrio vulgaris (strain DP4)</name>
    <name type="common">Desulfovibrio vulgaris</name>
    <dbReference type="NCBI Taxonomy" id="391774"/>
    <lineage>
        <taxon>Bacteria</taxon>
        <taxon>Pseudomonadati</taxon>
        <taxon>Thermodesulfobacteriota</taxon>
        <taxon>Desulfovibrionia</taxon>
        <taxon>Desulfovibrionales</taxon>
        <taxon>Desulfovibrionaceae</taxon>
        <taxon>Nitratidesulfovibrio</taxon>
    </lineage>
</organism>
<name>RS20_NITV4</name>
<gene>
    <name evidence="1" type="primary">rpsT</name>
    <name type="ordered locus">Dvul_1267</name>
</gene>
<keyword id="KW-0687">Ribonucleoprotein</keyword>
<keyword id="KW-0689">Ribosomal protein</keyword>
<keyword id="KW-0694">RNA-binding</keyword>
<keyword id="KW-0699">rRNA-binding</keyword>
<accession>A1VCX0</accession>
<reference key="1">
    <citation type="journal article" date="2009" name="Environ. Microbiol.">
        <title>Contribution of mobile genetic elements to Desulfovibrio vulgaris genome plasticity.</title>
        <authorList>
            <person name="Walker C.B."/>
            <person name="Stolyar S."/>
            <person name="Chivian D."/>
            <person name="Pinel N."/>
            <person name="Gabster J.A."/>
            <person name="Dehal P.S."/>
            <person name="He Z."/>
            <person name="Yang Z.K."/>
            <person name="Yen H.C."/>
            <person name="Zhou J."/>
            <person name="Wall J.D."/>
            <person name="Hazen T.C."/>
            <person name="Arkin A.P."/>
            <person name="Stahl D.A."/>
        </authorList>
    </citation>
    <scope>NUCLEOTIDE SEQUENCE [LARGE SCALE GENOMIC DNA]</scope>
    <source>
        <strain>DP4</strain>
    </source>
</reference>
<protein>
    <recommendedName>
        <fullName evidence="1">Small ribosomal subunit protein bS20</fullName>
    </recommendedName>
    <alternativeName>
        <fullName evidence="3">30S ribosomal protein S20</fullName>
    </alternativeName>
</protein>